<organism>
    <name type="scientific">Oceanobacillus iheyensis (strain DSM 14371 / CIP 107618 / JCM 11309 / KCTC 3954 / HTE831)</name>
    <dbReference type="NCBI Taxonomy" id="221109"/>
    <lineage>
        <taxon>Bacteria</taxon>
        <taxon>Bacillati</taxon>
        <taxon>Bacillota</taxon>
        <taxon>Bacilli</taxon>
        <taxon>Bacillales</taxon>
        <taxon>Bacillaceae</taxon>
        <taxon>Oceanobacillus</taxon>
    </lineage>
</organism>
<sequence length="192" mass="22074">MNMNEFKGVIEGLLFASGDEGVTAKQLSKILDIGLDTVEHILEELRFEYEREDRGLMIIQSNNIFHLATKPEHSSYFKRLIDSPRTSKMSQAALETLAIIAYRQPITRAEIDEIRGVRSERPVQTLITRNLIEETGRKDTVGRPVLFQTSKEFLTFFGLATLDDLPPLPENIDPDKEEREADLFFERFQDEV</sequence>
<comment type="function">
    <text evidence="1">Participates in chromosomal partition during cell division. May act via the formation of a condensin-like complex containing Smc and ScpA that pull DNA away from mid-cell into both cell halves.</text>
</comment>
<comment type="subunit">
    <text evidence="1">Homodimer. Homodimerization may be required to stabilize the binding of ScpA to the Smc head domains. Component of a cohesin-like complex composed of ScpA, ScpB and the Smc homodimer, in which ScpA and ScpB bind to the head domain of Smc. The presence of the three proteins is required for the association of the complex with DNA.</text>
</comment>
<comment type="subcellular location">
    <subcellularLocation>
        <location evidence="1">Cytoplasm</location>
    </subcellularLocation>
    <text evidence="1">Associated with two foci at the outer edges of the nucleoid region in young cells, and at four foci within both cell halves in older cells.</text>
</comment>
<comment type="similarity">
    <text evidence="1">Belongs to the ScpB family.</text>
</comment>
<accession>Q8EQ83</accession>
<dbReference type="EMBL" id="BA000028">
    <property type="protein sequence ID" value="BAC13783.1"/>
    <property type="molecule type" value="Genomic_DNA"/>
</dbReference>
<dbReference type="RefSeq" id="WP_011066225.1">
    <property type="nucleotide sequence ID" value="NC_004193.1"/>
</dbReference>
<dbReference type="SMR" id="Q8EQ83"/>
<dbReference type="STRING" id="221109.gene:10734067"/>
<dbReference type="KEGG" id="oih:OB1827"/>
<dbReference type="eggNOG" id="COG1386">
    <property type="taxonomic scope" value="Bacteria"/>
</dbReference>
<dbReference type="HOGENOM" id="CLU_045647_5_3_9"/>
<dbReference type="OrthoDB" id="9806226at2"/>
<dbReference type="PhylomeDB" id="Q8EQ83"/>
<dbReference type="Proteomes" id="UP000000822">
    <property type="component" value="Chromosome"/>
</dbReference>
<dbReference type="GO" id="GO:0005737">
    <property type="term" value="C:cytoplasm"/>
    <property type="evidence" value="ECO:0007669"/>
    <property type="project" value="UniProtKB-SubCell"/>
</dbReference>
<dbReference type="GO" id="GO:0051301">
    <property type="term" value="P:cell division"/>
    <property type="evidence" value="ECO:0007669"/>
    <property type="project" value="UniProtKB-KW"/>
</dbReference>
<dbReference type="GO" id="GO:0051304">
    <property type="term" value="P:chromosome separation"/>
    <property type="evidence" value="ECO:0007669"/>
    <property type="project" value="InterPro"/>
</dbReference>
<dbReference type="GO" id="GO:0006260">
    <property type="term" value="P:DNA replication"/>
    <property type="evidence" value="ECO:0007669"/>
    <property type="project" value="UniProtKB-UniRule"/>
</dbReference>
<dbReference type="Gene3D" id="1.10.10.10">
    <property type="entry name" value="Winged helix-like DNA-binding domain superfamily/Winged helix DNA-binding domain"/>
    <property type="match status" value="2"/>
</dbReference>
<dbReference type="HAMAP" id="MF_01804">
    <property type="entry name" value="ScpB"/>
    <property type="match status" value="1"/>
</dbReference>
<dbReference type="InterPro" id="IPR005234">
    <property type="entry name" value="ScpB_csome_segregation"/>
</dbReference>
<dbReference type="InterPro" id="IPR036388">
    <property type="entry name" value="WH-like_DNA-bd_sf"/>
</dbReference>
<dbReference type="InterPro" id="IPR036390">
    <property type="entry name" value="WH_DNA-bd_sf"/>
</dbReference>
<dbReference type="NCBIfam" id="TIGR00281">
    <property type="entry name" value="SMC-Scp complex subunit ScpB"/>
    <property type="match status" value="1"/>
</dbReference>
<dbReference type="PANTHER" id="PTHR34298">
    <property type="entry name" value="SEGREGATION AND CONDENSATION PROTEIN B"/>
    <property type="match status" value="1"/>
</dbReference>
<dbReference type="PANTHER" id="PTHR34298:SF2">
    <property type="entry name" value="SEGREGATION AND CONDENSATION PROTEIN B"/>
    <property type="match status" value="1"/>
</dbReference>
<dbReference type="Pfam" id="PF04079">
    <property type="entry name" value="SMC_ScpB"/>
    <property type="match status" value="1"/>
</dbReference>
<dbReference type="PIRSF" id="PIRSF019345">
    <property type="entry name" value="ScpB"/>
    <property type="match status" value="1"/>
</dbReference>
<dbReference type="SUPFAM" id="SSF46785">
    <property type="entry name" value="Winged helix' DNA-binding domain"/>
    <property type="match status" value="2"/>
</dbReference>
<protein>
    <recommendedName>
        <fullName evidence="1">Segregation and condensation protein B</fullName>
    </recommendedName>
</protein>
<name>SCPB_OCEIH</name>
<gene>
    <name evidence="1" type="primary">scpB</name>
    <name type="ordered locus">OB1827</name>
</gene>
<proteinExistence type="inferred from homology"/>
<evidence type="ECO:0000255" key="1">
    <source>
        <dbReference type="HAMAP-Rule" id="MF_01804"/>
    </source>
</evidence>
<keyword id="KW-0131">Cell cycle</keyword>
<keyword id="KW-0132">Cell division</keyword>
<keyword id="KW-0159">Chromosome partition</keyword>
<keyword id="KW-0963">Cytoplasm</keyword>
<keyword id="KW-1185">Reference proteome</keyword>
<reference key="1">
    <citation type="journal article" date="2002" name="Nucleic Acids Res.">
        <title>Genome sequence of Oceanobacillus iheyensis isolated from the Iheya Ridge and its unexpected adaptive capabilities to extreme environments.</title>
        <authorList>
            <person name="Takami H."/>
            <person name="Takaki Y."/>
            <person name="Uchiyama I."/>
        </authorList>
    </citation>
    <scope>NUCLEOTIDE SEQUENCE [LARGE SCALE GENOMIC DNA]</scope>
    <source>
        <strain>DSM 14371 / CIP 107618 / JCM 11309 / KCTC 3954 / HTE831</strain>
    </source>
</reference>
<feature type="chain" id="PRO_0000211144" description="Segregation and condensation protein B">
    <location>
        <begin position="1"/>
        <end position="192"/>
    </location>
</feature>